<organism>
    <name type="scientific">Pseudomonas putida (strain ATCC 47054 / DSM 6125 / CFBP 8728 / NCIMB 11950 / KT2440)</name>
    <dbReference type="NCBI Taxonomy" id="160488"/>
    <lineage>
        <taxon>Bacteria</taxon>
        <taxon>Pseudomonadati</taxon>
        <taxon>Pseudomonadota</taxon>
        <taxon>Gammaproteobacteria</taxon>
        <taxon>Pseudomonadales</taxon>
        <taxon>Pseudomonadaceae</taxon>
        <taxon>Pseudomonas</taxon>
    </lineage>
</organism>
<reference key="1">
    <citation type="journal article" date="2002" name="Environ. Microbiol.">
        <title>Complete genome sequence and comparative analysis of the metabolically versatile Pseudomonas putida KT2440.</title>
        <authorList>
            <person name="Nelson K.E."/>
            <person name="Weinel C."/>
            <person name="Paulsen I.T."/>
            <person name="Dodson R.J."/>
            <person name="Hilbert H."/>
            <person name="Martins dos Santos V.A.P."/>
            <person name="Fouts D.E."/>
            <person name="Gill S.R."/>
            <person name="Pop M."/>
            <person name="Holmes M."/>
            <person name="Brinkac L.M."/>
            <person name="Beanan M.J."/>
            <person name="DeBoy R.T."/>
            <person name="Daugherty S.C."/>
            <person name="Kolonay J.F."/>
            <person name="Madupu R."/>
            <person name="Nelson W.C."/>
            <person name="White O."/>
            <person name="Peterson J.D."/>
            <person name="Khouri H.M."/>
            <person name="Hance I."/>
            <person name="Chris Lee P."/>
            <person name="Holtzapple E.K."/>
            <person name="Scanlan D."/>
            <person name="Tran K."/>
            <person name="Moazzez A."/>
            <person name="Utterback T.R."/>
            <person name="Rizzo M."/>
            <person name="Lee K."/>
            <person name="Kosack D."/>
            <person name="Moestl D."/>
            <person name="Wedler H."/>
            <person name="Lauber J."/>
            <person name="Stjepandic D."/>
            <person name="Hoheisel J."/>
            <person name="Straetz M."/>
            <person name="Heim S."/>
            <person name="Kiewitz C."/>
            <person name="Eisen J.A."/>
            <person name="Timmis K.N."/>
            <person name="Duesterhoeft A."/>
            <person name="Tuemmler B."/>
            <person name="Fraser C.M."/>
        </authorList>
    </citation>
    <scope>NUCLEOTIDE SEQUENCE [LARGE SCALE GENOMIC DNA]</scope>
    <source>
        <strain>ATCC 47054 / DSM 6125 / CFBP 8728 / NCIMB 11950 / KT2440</strain>
    </source>
</reference>
<comment type="catalytic activity">
    <reaction evidence="1">
        <text>urea + 2 H2O + H(+) = hydrogencarbonate + 2 NH4(+)</text>
        <dbReference type="Rhea" id="RHEA:20557"/>
        <dbReference type="ChEBI" id="CHEBI:15377"/>
        <dbReference type="ChEBI" id="CHEBI:15378"/>
        <dbReference type="ChEBI" id="CHEBI:16199"/>
        <dbReference type="ChEBI" id="CHEBI:17544"/>
        <dbReference type="ChEBI" id="CHEBI:28938"/>
        <dbReference type="EC" id="3.5.1.5"/>
    </reaction>
</comment>
<comment type="pathway">
    <text evidence="1">Nitrogen metabolism; urea degradation; CO(2) and NH(3) from urea (urease route): step 1/1.</text>
</comment>
<comment type="subunit">
    <text evidence="1">Heterotrimer of UreA (gamma), UreB (beta) and UreC (alpha) subunits. Three heterotrimers associate to form the active enzyme.</text>
</comment>
<comment type="subcellular location">
    <subcellularLocation>
        <location evidence="1">Cytoplasm</location>
    </subcellularLocation>
</comment>
<comment type="similarity">
    <text evidence="1">Belongs to the urease gamma subunit family.</text>
</comment>
<name>URE3_PSEPK</name>
<sequence>MELTPREKDKLLLFTAALLAERRLARGLKLNYPEAVALISAAVLEGARDGRTVAELMSLGREVLTREQVMPGIAEMLHDVQVEATFPDGTKLVTVHDPIV</sequence>
<keyword id="KW-0963">Cytoplasm</keyword>
<keyword id="KW-0378">Hydrolase</keyword>
<keyword id="KW-1185">Reference proteome</keyword>
<proteinExistence type="inferred from homology"/>
<protein>
    <recommendedName>
        <fullName evidence="1">Urease subunit gamma</fullName>
        <ecNumber evidence="1">3.5.1.5</ecNumber>
    </recommendedName>
    <alternativeName>
        <fullName evidence="1">Urea amidohydrolase subunit gamma</fullName>
    </alternativeName>
</protein>
<dbReference type="EC" id="3.5.1.5" evidence="1"/>
<dbReference type="EMBL" id="AE015451">
    <property type="protein sequence ID" value="AAN68451.1"/>
    <property type="molecule type" value="Genomic_DNA"/>
</dbReference>
<dbReference type="RefSeq" id="NP_744987.1">
    <property type="nucleotide sequence ID" value="NC_002947.4"/>
</dbReference>
<dbReference type="RefSeq" id="WP_003253929.1">
    <property type="nucleotide sequence ID" value="NZ_CP169744.1"/>
</dbReference>
<dbReference type="SMR" id="Q88J06"/>
<dbReference type="STRING" id="160488.PP_2843"/>
<dbReference type="PaxDb" id="160488-PP_2843"/>
<dbReference type="KEGG" id="ppu:PP_2843"/>
<dbReference type="PATRIC" id="fig|160488.4.peg.3016"/>
<dbReference type="eggNOG" id="COG0831">
    <property type="taxonomic scope" value="Bacteria"/>
</dbReference>
<dbReference type="HOGENOM" id="CLU_145825_1_0_6"/>
<dbReference type="OrthoDB" id="9797217at2"/>
<dbReference type="PhylomeDB" id="Q88J06"/>
<dbReference type="BioCyc" id="PPUT160488:G1G01-3023-MONOMER"/>
<dbReference type="UniPathway" id="UPA00258">
    <property type="reaction ID" value="UER00370"/>
</dbReference>
<dbReference type="Proteomes" id="UP000000556">
    <property type="component" value="Chromosome"/>
</dbReference>
<dbReference type="GO" id="GO:0005737">
    <property type="term" value="C:cytoplasm"/>
    <property type="evidence" value="ECO:0007669"/>
    <property type="project" value="UniProtKB-SubCell"/>
</dbReference>
<dbReference type="GO" id="GO:0016151">
    <property type="term" value="F:nickel cation binding"/>
    <property type="evidence" value="ECO:0007669"/>
    <property type="project" value="InterPro"/>
</dbReference>
<dbReference type="GO" id="GO:0009039">
    <property type="term" value="F:urease activity"/>
    <property type="evidence" value="ECO:0007669"/>
    <property type="project" value="UniProtKB-UniRule"/>
</dbReference>
<dbReference type="GO" id="GO:0043419">
    <property type="term" value="P:urea catabolic process"/>
    <property type="evidence" value="ECO:0007669"/>
    <property type="project" value="UniProtKB-UniRule"/>
</dbReference>
<dbReference type="CDD" id="cd00390">
    <property type="entry name" value="Urease_gamma"/>
    <property type="match status" value="1"/>
</dbReference>
<dbReference type="Gene3D" id="3.30.280.10">
    <property type="entry name" value="Urease, gamma-like subunit"/>
    <property type="match status" value="1"/>
</dbReference>
<dbReference type="HAMAP" id="MF_00739">
    <property type="entry name" value="Urease_gamma"/>
    <property type="match status" value="1"/>
</dbReference>
<dbReference type="InterPro" id="IPR012010">
    <property type="entry name" value="Urease_gamma"/>
</dbReference>
<dbReference type="InterPro" id="IPR002026">
    <property type="entry name" value="Urease_gamma/gamma-beta_su"/>
</dbReference>
<dbReference type="InterPro" id="IPR036463">
    <property type="entry name" value="Urease_gamma_sf"/>
</dbReference>
<dbReference type="InterPro" id="IPR050069">
    <property type="entry name" value="Urease_subunit"/>
</dbReference>
<dbReference type="NCBIfam" id="NF009712">
    <property type="entry name" value="PRK13241.1"/>
    <property type="match status" value="1"/>
</dbReference>
<dbReference type="NCBIfam" id="TIGR00193">
    <property type="entry name" value="urease_gam"/>
    <property type="match status" value="1"/>
</dbReference>
<dbReference type="PANTHER" id="PTHR33569">
    <property type="entry name" value="UREASE"/>
    <property type="match status" value="1"/>
</dbReference>
<dbReference type="PANTHER" id="PTHR33569:SF1">
    <property type="entry name" value="UREASE"/>
    <property type="match status" value="1"/>
</dbReference>
<dbReference type="Pfam" id="PF00547">
    <property type="entry name" value="Urease_gamma"/>
    <property type="match status" value="1"/>
</dbReference>
<dbReference type="PIRSF" id="PIRSF001223">
    <property type="entry name" value="Urease_gamma"/>
    <property type="match status" value="1"/>
</dbReference>
<dbReference type="SUPFAM" id="SSF54111">
    <property type="entry name" value="Urease, gamma-subunit"/>
    <property type="match status" value="1"/>
</dbReference>
<gene>
    <name evidence="1" type="primary">ureA</name>
    <name type="ordered locus">PP_2843</name>
</gene>
<evidence type="ECO:0000255" key="1">
    <source>
        <dbReference type="HAMAP-Rule" id="MF_00739"/>
    </source>
</evidence>
<feature type="chain" id="PRO_0000098029" description="Urease subunit gamma">
    <location>
        <begin position="1"/>
        <end position="100"/>
    </location>
</feature>
<accession>Q88J06</accession>